<feature type="chain" id="PRO_0000197553" description="Transposase B from transposon Tn554">
    <location>
        <begin position="1"/>
        <end position="630"/>
    </location>
</feature>
<feature type="domain" description="Core-binding (CB)" evidence="3">
    <location>
        <begin position="216"/>
        <end position="302"/>
    </location>
</feature>
<feature type="domain" description="Tyr recombinase" evidence="2">
    <location>
        <begin position="326"/>
        <end position="513"/>
    </location>
</feature>
<feature type="active site" evidence="2">
    <location>
        <position position="363"/>
    </location>
</feature>
<feature type="active site" evidence="2">
    <location>
        <position position="391"/>
    </location>
</feature>
<feature type="active site" evidence="2">
    <location>
        <position position="465"/>
    </location>
</feature>
<feature type="active site" evidence="2">
    <location>
        <position position="468"/>
    </location>
</feature>
<feature type="active site" evidence="2">
    <location>
        <position position="491"/>
    </location>
</feature>
<feature type="active site" description="O-(3'-phospho-DNA)-tyrosine intermediate" evidence="2">
    <location>
        <position position="500"/>
    </location>
</feature>
<proteinExistence type="inferred from homology"/>
<organism>
    <name type="scientific">Staphylococcus aureus (strain Mu50 / ATCC 700699)</name>
    <dbReference type="NCBI Taxonomy" id="158878"/>
    <lineage>
        <taxon>Bacteria</taxon>
        <taxon>Bacillati</taxon>
        <taxon>Bacillota</taxon>
        <taxon>Bacilli</taxon>
        <taxon>Bacillales</taxon>
        <taxon>Staphylococcaceae</taxon>
        <taxon>Staphylococcus</taxon>
    </lineage>
</organism>
<dbReference type="EMBL" id="BA000017">
    <property type="protein sequence ID" value="BAB56217.1"/>
    <property type="molecule type" value="Genomic_DNA"/>
</dbReference>
<dbReference type="EMBL" id="BA000017">
    <property type="protein sequence ID" value="BAB57820.1"/>
    <property type="molecule type" value="Genomic_DNA"/>
</dbReference>
<dbReference type="RefSeq" id="WP_001557544.1">
    <property type="nucleotide sequence ID" value="NC_002758.2"/>
</dbReference>
<dbReference type="SMR" id="P0A053"/>
<dbReference type="KEGG" id="sav:SAV0055"/>
<dbReference type="KEGG" id="sav:SAV1658"/>
<dbReference type="HOGENOM" id="CLU_030252_2_0_9"/>
<dbReference type="Proteomes" id="UP000002481">
    <property type="component" value="Chromosome"/>
</dbReference>
<dbReference type="GO" id="GO:0003677">
    <property type="term" value="F:DNA binding"/>
    <property type="evidence" value="ECO:0007669"/>
    <property type="project" value="UniProtKB-KW"/>
</dbReference>
<dbReference type="GO" id="GO:0015074">
    <property type="term" value="P:DNA integration"/>
    <property type="evidence" value="ECO:0007669"/>
    <property type="project" value="UniProtKB-KW"/>
</dbReference>
<dbReference type="GO" id="GO:0006310">
    <property type="term" value="P:DNA recombination"/>
    <property type="evidence" value="ECO:0007669"/>
    <property type="project" value="UniProtKB-KW"/>
</dbReference>
<dbReference type="CDD" id="cd01187">
    <property type="entry name" value="INT_tnpB_C_Tn554"/>
    <property type="match status" value="1"/>
</dbReference>
<dbReference type="Gene3D" id="1.10.150.130">
    <property type="match status" value="1"/>
</dbReference>
<dbReference type="Gene3D" id="1.10.443.10">
    <property type="entry name" value="Intergrase catalytic core"/>
    <property type="match status" value="1"/>
</dbReference>
<dbReference type="InterPro" id="IPR044068">
    <property type="entry name" value="CB"/>
</dbReference>
<dbReference type="InterPro" id="IPR011010">
    <property type="entry name" value="DNA_brk_join_enz"/>
</dbReference>
<dbReference type="InterPro" id="IPR013762">
    <property type="entry name" value="Integrase-like_cat_sf"/>
</dbReference>
<dbReference type="InterPro" id="IPR002104">
    <property type="entry name" value="Integrase_catalytic"/>
</dbReference>
<dbReference type="InterPro" id="IPR010998">
    <property type="entry name" value="Integrase_recombinase_N"/>
</dbReference>
<dbReference type="InterPro" id="IPR050090">
    <property type="entry name" value="Tyrosine_recombinase_XerCD"/>
</dbReference>
<dbReference type="PANTHER" id="PTHR30349">
    <property type="entry name" value="PHAGE INTEGRASE-RELATED"/>
    <property type="match status" value="1"/>
</dbReference>
<dbReference type="Pfam" id="PF00589">
    <property type="entry name" value="Phage_integrase"/>
    <property type="match status" value="1"/>
</dbReference>
<dbReference type="SUPFAM" id="SSF56349">
    <property type="entry name" value="DNA breaking-rejoining enzymes"/>
    <property type="match status" value="1"/>
</dbReference>
<dbReference type="PROSITE" id="PS51900">
    <property type="entry name" value="CB"/>
    <property type="match status" value="1"/>
</dbReference>
<dbReference type="PROSITE" id="PS51898">
    <property type="entry name" value="TYR_RECOMBINASE"/>
    <property type="match status" value="1"/>
</dbReference>
<accession>P0A053</accession>
<accession>P06697</accession>
<gene>
    <name type="primary">tnpB1</name>
    <name type="ordered locus">SAV0055</name>
</gene>
<gene>
    <name type="primary">tnpB2</name>
    <name type="ordered locus">SAV1658</name>
</gene>
<name>TNPB_STAAM</name>
<sequence>MNASSKRKIISQSEISKKIAVMNEEMQGFWANNSWDIRKCPHPSAIELSKNPALRNRWVRFERVKNLWLRTELKYFYFYHLNNGIWNAKTVWIRKGTVINKMLDFLDLKYPSITSITEVPIEKAMTEYRTYLTKRGVRITTTNYKITANQEKTPVKANSYYVTNLKQFMEFYENFYFDGEEWDKDVWDRRNLPLPDDKVNPTQYEYTINFKGFRNTYFKQLVKRYCKLRLNVDSFSYVSDIAQRLKEFFNFLDMKFKQVQRVHQLTRVEIEAYLSELNMMGIKPSTITGRISILEGLFSTLLRLEWDDVPSKILIYSEDYPKIPRAKPRFIDEFVLEQLNSHLDKLPEYIATMTMIVQECGMRISELCTLKKGCLLEDKDGDFFLKYYQWKMKKEHIVPISKEVALLIKVREDKVSEEFPDSEYLFPRKDGSPLKQETFRGELNKLAYEQNIVDKSGEIYRFHAHAFRHTVGTRMINNGMPQHIVQKFLGHESPEMTSRYAHIFDETLKNEFTKFQEKLVTNNGDVLDLDEDNEVDDVELQWFKKNINAQVLPNGYCRLPVVAGGCPHANACLDCTHFCTSKQFLPQHEEQLERTEELLAIAKDKQWQRQVETNSRVKERLEQIIGSLTG</sequence>
<comment type="function">
    <text evidence="1">One of three proteins encoded by transposon Tn554 required for its transposition.</text>
</comment>
<comment type="similarity">
    <text evidence="4">Belongs to the 'phage' integrase family.</text>
</comment>
<protein>
    <recommendedName>
        <fullName>Transposase B from transposon Tn554</fullName>
    </recommendedName>
</protein>
<evidence type="ECO:0000250" key="1"/>
<evidence type="ECO:0000255" key="2">
    <source>
        <dbReference type="PROSITE-ProRule" id="PRU01246"/>
    </source>
</evidence>
<evidence type="ECO:0000255" key="3">
    <source>
        <dbReference type="PROSITE-ProRule" id="PRU01248"/>
    </source>
</evidence>
<evidence type="ECO:0000305" key="4"/>
<keyword id="KW-0229">DNA integration</keyword>
<keyword id="KW-0233">DNA recombination</keyword>
<keyword id="KW-0238">DNA-binding</keyword>
<keyword id="KW-0814">Transposable element</keyword>
<reference key="1">
    <citation type="journal article" date="2001" name="Lancet">
        <title>Whole genome sequencing of meticillin-resistant Staphylococcus aureus.</title>
        <authorList>
            <person name="Kuroda M."/>
            <person name="Ohta T."/>
            <person name="Uchiyama I."/>
            <person name="Baba T."/>
            <person name="Yuzawa H."/>
            <person name="Kobayashi I."/>
            <person name="Cui L."/>
            <person name="Oguchi A."/>
            <person name="Aoki K."/>
            <person name="Nagai Y."/>
            <person name="Lian J.-Q."/>
            <person name="Ito T."/>
            <person name="Kanamori M."/>
            <person name="Matsumaru H."/>
            <person name="Maruyama A."/>
            <person name="Murakami H."/>
            <person name="Hosoyama A."/>
            <person name="Mizutani-Ui Y."/>
            <person name="Takahashi N.K."/>
            <person name="Sawano T."/>
            <person name="Inoue R."/>
            <person name="Kaito C."/>
            <person name="Sekimizu K."/>
            <person name="Hirakawa H."/>
            <person name="Kuhara S."/>
            <person name="Goto S."/>
            <person name="Yabuzaki J."/>
            <person name="Kanehisa M."/>
            <person name="Yamashita A."/>
            <person name="Oshima K."/>
            <person name="Furuya K."/>
            <person name="Yoshino C."/>
            <person name="Shiba T."/>
            <person name="Hattori M."/>
            <person name="Ogasawara N."/>
            <person name="Hayashi H."/>
            <person name="Hiramatsu K."/>
        </authorList>
    </citation>
    <scope>NUCLEOTIDE SEQUENCE [LARGE SCALE GENOMIC DNA]</scope>
    <source>
        <strain>Mu50 / ATCC 700699</strain>
    </source>
</reference>